<reference key="1">
    <citation type="submission" date="2007-12" db="EMBL/GenBank/DDBJ databases">
        <title>Complete sequence of Methylobacterium extorquens PA1.</title>
        <authorList>
            <consortium name="US DOE Joint Genome Institute"/>
            <person name="Copeland A."/>
            <person name="Lucas S."/>
            <person name="Lapidus A."/>
            <person name="Barry K."/>
            <person name="Glavina del Rio T."/>
            <person name="Dalin E."/>
            <person name="Tice H."/>
            <person name="Pitluck S."/>
            <person name="Saunders E."/>
            <person name="Brettin T."/>
            <person name="Bruce D."/>
            <person name="Detter J.C."/>
            <person name="Han C."/>
            <person name="Schmutz J."/>
            <person name="Larimer F."/>
            <person name="Land M."/>
            <person name="Hauser L."/>
            <person name="Kyrpides N."/>
            <person name="Kim E."/>
            <person name="Marx C."/>
            <person name="Richardson P."/>
        </authorList>
    </citation>
    <scope>NUCLEOTIDE SEQUENCE [LARGE SCALE GENOMIC DNA]</scope>
    <source>
        <strain>PA1</strain>
    </source>
</reference>
<dbReference type="EMBL" id="CP000908">
    <property type="protein sequence ID" value="ABY30748.1"/>
    <property type="molecule type" value="Genomic_DNA"/>
</dbReference>
<dbReference type="RefSeq" id="WP_012253788.1">
    <property type="nucleotide sequence ID" value="NC_010172.1"/>
</dbReference>
<dbReference type="SMR" id="A9W592"/>
<dbReference type="GeneID" id="72990038"/>
<dbReference type="KEGG" id="mex:Mext_2353"/>
<dbReference type="eggNOG" id="COG0230">
    <property type="taxonomic scope" value="Bacteria"/>
</dbReference>
<dbReference type="HOGENOM" id="CLU_129938_2_0_5"/>
<dbReference type="BioCyc" id="MEXT419610:MEXT_RS11855-MONOMER"/>
<dbReference type="GO" id="GO:1990904">
    <property type="term" value="C:ribonucleoprotein complex"/>
    <property type="evidence" value="ECO:0007669"/>
    <property type="project" value="UniProtKB-KW"/>
</dbReference>
<dbReference type="GO" id="GO:0005840">
    <property type="term" value="C:ribosome"/>
    <property type="evidence" value="ECO:0007669"/>
    <property type="project" value="UniProtKB-KW"/>
</dbReference>
<dbReference type="GO" id="GO:0003735">
    <property type="term" value="F:structural constituent of ribosome"/>
    <property type="evidence" value="ECO:0007669"/>
    <property type="project" value="InterPro"/>
</dbReference>
<dbReference type="GO" id="GO:0006412">
    <property type="term" value="P:translation"/>
    <property type="evidence" value="ECO:0007669"/>
    <property type="project" value="UniProtKB-UniRule"/>
</dbReference>
<dbReference type="FunFam" id="1.10.287.3980:FF:000001">
    <property type="entry name" value="Mitochondrial ribosomal protein L34"/>
    <property type="match status" value="1"/>
</dbReference>
<dbReference type="Gene3D" id="1.10.287.3980">
    <property type="match status" value="1"/>
</dbReference>
<dbReference type="HAMAP" id="MF_00391">
    <property type="entry name" value="Ribosomal_bL34"/>
    <property type="match status" value="1"/>
</dbReference>
<dbReference type="InterPro" id="IPR000271">
    <property type="entry name" value="Ribosomal_bL34"/>
</dbReference>
<dbReference type="InterPro" id="IPR020939">
    <property type="entry name" value="Ribosomal_bL34_CS"/>
</dbReference>
<dbReference type="NCBIfam" id="TIGR01030">
    <property type="entry name" value="rpmH_bact"/>
    <property type="match status" value="1"/>
</dbReference>
<dbReference type="PANTHER" id="PTHR14503:SF4">
    <property type="entry name" value="LARGE RIBOSOMAL SUBUNIT PROTEIN BL34M"/>
    <property type="match status" value="1"/>
</dbReference>
<dbReference type="PANTHER" id="PTHR14503">
    <property type="entry name" value="MITOCHONDRIAL RIBOSOMAL PROTEIN 34 FAMILY MEMBER"/>
    <property type="match status" value="1"/>
</dbReference>
<dbReference type="Pfam" id="PF00468">
    <property type="entry name" value="Ribosomal_L34"/>
    <property type="match status" value="1"/>
</dbReference>
<dbReference type="PROSITE" id="PS00784">
    <property type="entry name" value="RIBOSOMAL_L34"/>
    <property type="match status" value="1"/>
</dbReference>
<organism>
    <name type="scientific">Methylorubrum extorquens (strain PA1)</name>
    <name type="common">Methylobacterium extorquens</name>
    <dbReference type="NCBI Taxonomy" id="419610"/>
    <lineage>
        <taxon>Bacteria</taxon>
        <taxon>Pseudomonadati</taxon>
        <taxon>Pseudomonadota</taxon>
        <taxon>Alphaproteobacteria</taxon>
        <taxon>Hyphomicrobiales</taxon>
        <taxon>Methylobacteriaceae</taxon>
        <taxon>Methylorubrum</taxon>
    </lineage>
</organism>
<feature type="chain" id="PRO_1000196066" description="Large ribosomal subunit protein bL34">
    <location>
        <begin position="1"/>
        <end position="44"/>
    </location>
</feature>
<evidence type="ECO:0000255" key="1">
    <source>
        <dbReference type="HAMAP-Rule" id="MF_00391"/>
    </source>
</evidence>
<evidence type="ECO:0000305" key="2"/>
<proteinExistence type="inferred from homology"/>
<name>RL34_METEP</name>
<sequence length="44" mass="5089">MKRTYQPSKLVRKRRHGFRARMATAGGRKVIAARRAHGRKRLSA</sequence>
<protein>
    <recommendedName>
        <fullName evidence="1">Large ribosomal subunit protein bL34</fullName>
    </recommendedName>
    <alternativeName>
        <fullName evidence="2">50S ribosomal protein L34</fullName>
    </alternativeName>
</protein>
<comment type="similarity">
    <text evidence="1">Belongs to the bacterial ribosomal protein bL34 family.</text>
</comment>
<gene>
    <name evidence="1" type="primary">rpmH</name>
    <name type="ordered locus">Mext_2353</name>
</gene>
<keyword id="KW-0687">Ribonucleoprotein</keyword>
<keyword id="KW-0689">Ribosomal protein</keyword>
<accession>A9W592</accession>